<sequence>MDAVNENGKRAMKDDSHGNSTSPKRRKSRHISALILARGGSKGIPLKNIKMLAGVPLIGWVIRAAVDSNVFNSVWVSTDHEEIAKVALAWGAKVHKRSPEVSQDSSSSLDTIREFSRQHREVDVICNIQATSPCLHPKHLTEAVELITKQGYDSVFSVVRRHNFRWKEVEKGGDCSTEPMNLNPACRPRRQDWSGELCENGSFYFAKKELIEQGLLQGGKKTYYEMKPEYSVDIDVDIDWPVAEQRVLRFGYFGKDKPEVVRLLLCNVSGCLTDGQIYTSASGEEMVSINIRDQIGISMLKKEGVKVILLETYPIAKALAVRLSERMGCPLLHHMDDKLKEVERIMVEEKLEWKEVAYLGNDEADVKCLELAGLSGVPVDAPTVALNHTKYTCHNAAGHGAVREFAEHILLLKKKAKSQMEQDRICRDAF</sequence>
<comment type="function">
    <text evidence="3">Catalyzes the activation of N-acetylneuraminic acid (NeuNAc) to cytidine 5'-monophosphate N-acetylneuraminic acid (CMP-NeuNAc), a substrate required for the addition of sialic acid. Also has activity towards N-glycolylneuraminic acid (Neu5Gc). Has weak activity towards 2-keto-3-deoxy-D-glycero-D-galacto-nononic acid (KDN).</text>
</comment>
<comment type="catalytic activity">
    <reaction evidence="3">
        <text>an N-acylneuraminate + CTP = a CMP-N-acyl-beta-neuraminate + diphosphate</text>
        <dbReference type="Rhea" id="RHEA:11344"/>
        <dbReference type="ChEBI" id="CHEBI:33019"/>
        <dbReference type="ChEBI" id="CHEBI:37563"/>
        <dbReference type="ChEBI" id="CHEBI:60073"/>
        <dbReference type="ChEBI" id="CHEBI:68671"/>
        <dbReference type="EC" id="2.7.7.43"/>
    </reaction>
</comment>
<comment type="pathway">
    <text evidence="3">Amino-sugar metabolism; N-acetylneuraminate metabolism.</text>
</comment>
<comment type="subunit">
    <text evidence="3">Homotetramer.</text>
</comment>
<comment type="subcellular location">
    <subcellularLocation>
        <location evidence="3">Nucleus</location>
    </subcellularLocation>
</comment>
<comment type="developmental stage">
    <text evidence="3">Detected in the axial mesoderm at 9 hours post-fertilization (hpf). Expressed in the central nervous system, somites, notochord and developing pronephric duct at 18 hpf. At later stages (48-72 hpf) expression decreases in the trunk but persists in the central nervous system, and is also found in liver and kidney primordia.</text>
</comment>
<comment type="similarity">
    <text evidence="5">Belongs to the CMP-NeuNAc synthase family.</text>
</comment>
<comment type="sequence caution" evidence="5">
    <conflict type="erroneous termination">
        <sequence resource="EMBL-CDS" id="AAI15047"/>
    </conflict>
    <text>Truncated C-terminus.</text>
</comment>
<comment type="sequence caution" evidence="5">
    <conflict type="erroneous initiation">
        <sequence resource="EMBL-CDS" id="AAI63617"/>
    </conflict>
    <text>Truncated N-terminus.</text>
</comment>
<comment type="sequence caution" evidence="5">
    <conflict type="miscellaneous discrepancy">
        <sequence resource="EMBL-CDS" id="AAI65783"/>
    </conflict>
    <text>Sequence of unknown origin at N terminus.</text>
</comment>
<dbReference type="EC" id="2.7.7.43" evidence="3"/>
<dbReference type="EMBL" id="BX571719">
    <property type="status" value="NOT_ANNOTATED_CDS"/>
    <property type="molecule type" value="Genomic_DNA"/>
</dbReference>
<dbReference type="EMBL" id="JQ015186">
    <property type="protein sequence ID" value="AFC17880.1"/>
    <property type="molecule type" value="mRNA"/>
</dbReference>
<dbReference type="EMBL" id="AM262833">
    <property type="protein sequence ID" value="CAK18993.1"/>
    <property type="molecule type" value="mRNA"/>
</dbReference>
<dbReference type="EMBL" id="BC115046">
    <property type="protein sequence ID" value="AAI15047.1"/>
    <property type="status" value="ALT_SEQ"/>
    <property type="molecule type" value="mRNA"/>
</dbReference>
<dbReference type="EMBL" id="BC163617">
    <property type="protein sequence ID" value="AAI63617.1"/>
    <property type="status" value="ALT_INIT"/>
    <property type="molecule type" value="mRNA"/>
</dbReference>
<dbReference type="EMBL" id="BC165783">
    <property type="protein sequence ID" value="AAI65783.1"/>
    <property type="status" value="ALT_SEQ"/>
    <property type="molecule type" value="mRNA"/>
</dbReference>
<dbReference type="RefSeq" id="NP_001035342.2">
    <property type="nucleotide sequence ID" value="NM_001040252.2"/>
</dbReference>
<dbReference type="SMR" id="Q0E671"/>
<dbReference type="FunCoup" id="Q0E671">
    <property type="interactions" value="142"/>
</dbReference>
<dbReference type="STRING" id="7955.ENSDARP00000134059"/>
<dbReference type="PaxDb" id="7955-ENSDARP00000074418"/>
<dbReference type="Ensembl" id="ENSDART00000158094">
    <property type="protein sequence ID" value="ENSDARP00000134059"/>
    <property type="gene ID" value="ENSDARG00000057334"/>
</dbReference>
<dbReference type="GeneID" id="561018"/>
<dbReference type="KEGG" id="dre:561018"/>
<dbReference type="AGR" id="ZFIN:ZDB-GENE-050420-277"/>
<dbReference type="CTD" id="561018"/>
<dbReference type="ZFIN" id="ZDB-GENE-050420-277">
    <property type="gene designation" value="cmasa"/>
</dbReference>
<dbReference type="eggNOG" id="ENOG502QQH3">
    <property type="taxonomic scope" value="Eukaryota"/>
</dbReference>
<dbReference type="InParanoid" id="Q0E671"/>
<dbReference type="OMA" id="FHGFVWR"/>
<dbReference type="OrthoDB" id="10262032at2759"/>
<dbReference type="PhylomeDB" id="Q0E671"/>
<dbReference type="TreeFam" id="TF324840"/>
<dbReference type="BRENDA" id="2.7.7.43">
    <property type="organism ID" value="928"/>
</dbReference>
<dbReference type="Reactome" id="R-DRE-4085001">
    <property type="pathway name" value="Sialic acid metabolism"/>
</dbReference>
<dbReference type="UniPathway" id="UPA00628"/>
<dbReference type="PRO" id="PR:Q0E671"/>
<dbReference type="Proteomes" id="UP000000437">
    <property type="component" value="Chromosome 4"/>
</dbReference>
<dbReference type="Bgee" id="ENSDARG00000057334">
    <property type="expression patterns" value="Expressed in mature ovarian follicle and 27 other cell types or tissues"/>
</dbReference>
<dbReference type="ExpressionAtlas" id="Q0E671">
    <property type="expression patterns" value="baseline"/>
</dbReference>
<dbReference type="GO" id="GO:0005634">
    <property type="term" value="C:nucleus"/>
    <property type="evidence" value="ECO:0000314"/>
    <property type="project" value="ZFIN"/>
</dbReference>
<dbReference type="GO" id="GO:0008781">
    <property type="term" value="F:N-acylneuraminate cytidylyltransferase activity"/>
    <property type="evidence" value="ECO:0000314"/>
    <property type="project" value="ZFIN"/>
</dbReference>
<dbReference type="GO" id="GO:0006054">
    <property type="term" value="P:N-acetylneuraminate metabolic process"/>
    <property type="evidence" value="ECO:0007669"/>
    <property type="project" value="UniProtKB-UniPathway"/>
</dbReference>
<dbReference type="CDD" id="cd02513">
    <property type="entry name" value="CMP-NeuAc_Synthase"/>
    <property type="match status" value="1"/>
</dbReference>
<dbReference type="FunFam" id="3.40.50.1000:FF:000082">
    <property type="entry name" value="N-acylneuraminate cytidylyltransferase A"/>
    <property type="match status" value="1"/>
</dbReference>
<dbReference type="FunFam" id="3.90.550.10:FF:000074">
    <property type="entry name" value="N-acylneuraminate cytidylyltransferase A"/>
    <property type="match status" value="1"/>
</dbReference>
<dbReference type="Gene3D" id="3.40.50.1000">
    <property type="entry name" value="HAD superfamily/HAD-like"/>
    <property type="match status" value="1"/>
</dbReference>
<dbReference type="Gene3D" id="3.90.550.10">
    <property type="entry name" value="Spore Coat Polysaccharide Biosynthesis Protein SpsA, Chain A"/>
    <property type="match status" value="1"/>
</dbReference>
<dbReference type="InterPro" id="IPR050793">
    <property type="entry name" value="CMP-NeuNAc_synthase"/>
</dbReference>
<dbReference type="InterPro" id="IPR003329">
    <property type="entry name" value="Cytidylyl_trans"/>
</dbReference>
<dbReference type="InterPro" id="IPR036412">
    <property type="entry name" value="HAD-like_sf"/>
</dbReference>
<dbReference type="InterPro" id="IPR023214">
    <property type="entry name" value="HAD_sf"/>
</dbReference>
<dbReference type="InterPro" id="IPR029044">
    <property type="entry name" value="Nucleotide-diphossugar_trans"/>
</dbReference>
<dbReference type="PANTHER" id="PTHR21485">
    <property type="entry name" value="HAD SUPERFAMILY MEMBERS CMAS AND KDSC"/>
    <property type="match status" value="1"/>
</dbReference>
<dbReference type="PANTHER" id="PTHR21485:SF3">
    <property type="entry name" value="N-ACYLNEURAMINATE CYTIDYLYLTRANSFERASE"/>
    <property type="match status" value="1"/>
</dbReference>
<dbReference type="Pfam" id="PF02348">
    <property type="entry name" value="CTP_transf_3"/>
    <property type="match status" value="1"/>
</dbReference>
<dbReference type="SUPFAM" id="SSF56784">
    <property type="entry name" value="HAD-like"/>
    <property type="match status" value="1"/>
</dbReference>
<dbReference type="SUPFAM" id="SSF53448">
    <property type="entry name" value="Nucleotide-diphospho-sugar transferases"/>
    <property type="match status" value="1"/>
</dbReference>
<feature type="chain" id="PRO_0000438685" description="N-acylneuraminate cytidylyltransferase A">
    <location>
        <begin position="1"/>
        <end position="430"/>
    </location>
</feature>
<feature type="region of interest" description="Disordered" evidence="2">
    <location>
        <begin position="1"/>
        <end position="29"/>
    </location>
</feature>
<feature type="short sequence motif" description="Bipartite nuclear localization signal" evidence="3">
    <location>
        <begin position="9"/>
        <end position="27"/>
    </location>
</feature>
<feature type="compositionally biased region" description="Basic and acidic residues" evidence="2">
    <location>
        <begin position="7"/>
        <end position="17"/>
    </location>
</feature>
<feature type="active site" evidence="1">
    <location>
        <position position="187"/>
    </location>
</feature>
<feature type="binding site" evidence="1">
    <location>
        <position position="38"/>
    </location>
    <ligand>
        <name>substrate</name>
    </ligand>
</feature>
<feature type="binding site" evidence="1">
    <location>
        <position position="48"/>
    </location>
    <ligand>
        <name>substrate</name>
    </ligand>
</feature>
<feature type="binding site" evidence="1">
    <location>
        <position position="97"/>
    </location>
    <ligand>
        <name>substrate</name>
    </ligand>
</feature>
<feature type="binding site" evidence="1">
    <location>
        <position position="106"/>
    </location>
    <ligand>
        <name>substrate</name>
    </ligand>
</feature>
<feature type="binding site" evidence="1">
    <location>
        <position position="108"/>
    </location>
    <ligand>
        <name>substrate</name>
    </ligand>
</feature>
<feature type="binding site" evidence="1">
    <location>
        <position position="129"/>
    </location>
    <ligand>
        <name>substrate</name>
    </ligand>
</feature>
<feature type="mutagenesis site" description="Fails to localize to the nucleus. No effect on catalytic activity." evidence="3">
    <location>
        <begin position="9"/>
        <end position="13"/>
    </location>
</feature>
<feature type="mutagenesis site" description="Fails to localize to the nucleus. No effect on catalytic activity." evidence="3">
    <location>
        <begin position="24"/>
        <end position="27"/>
    </location>
</feature>
<feature type="mutagenesis site" description="Abolishes catalytic activity. No effect on nuclear localization." evidence="3">
    <location>
        <begin position="184"/>
        <end position="190"/>
    </location>
</feature>
<feature type="sequence conflict" description="In Ref. 4; AAI15047/AAI65783." evidence="5" ref="4">
    <original>R</original>
    <variation>K</variation>
    <location>
        <position position="322"/>
    </location>
</feature>
<gene>
    <name evidence="13" type="primary">cmasa</name>
    <name evidence="13" type="synonym">cmas</name>
    <name evidence="4" type="synonym">cmas1</name>
</gene>
<reference evidence="10" key="1">
    <citation type="journal article" date="2012" name="J. Biol. Chem.">
        <title>Identification and biochemical characterization of two functional CMP-sialic acid synthetases in Danio rerio.</title>
        <authorList>
            <person name="Schaper W."/>
            <person name="Bentrop J."/>
            <person name="Ustinova J."/>
            <person name="Blume L."/>
            <person name="Kats E."/>
            <person name="Tiralongo J."/>
            <person name="Weinhold B."/>
            <person name="Bastmeyer M."/>
            <person name="Munster-Kuhnel A.K."/>
        </authorList>
    </citation>
    <scope>NUCLEOTIDE SEQUENCE [MRNA]</scope>
    <scope>FUNCTION</scope>
    <scope>CATALYTIC ACTIVITY</scope>
    <scope>PATHWAY</scope>
    <scope>SUBUNIT</scope>
    <scope>SUBCELLULAR LOCATION</scope>
    <scope>DEVELOPMENTAL STAGE</scope>
    <scope>MOTIF</scope>
    <scope>MUTAGENESIS OF 9-LYS--LYS-13; 24-LYS--LYS-27 AND 184-PRO--ARG-190</scope>
</reference>
<reference evidence="11" key="2">
    <citation type="submission" date="2006-05" db="EMBL/GenBank/DDBJ databases">
        <authorList>
            <person name="Lehmann F."/>
        </authorList>
    </citation>
    <scope>NUCLEOTIDE SEQUENCE [MRNA]</scope>
</reference>
<reference evidence="12" key="3">
    <citation type="journal article" date="2013" name="Nature">
        <title>The zebrafish reference genome sequence and its relationship to the human genome.</title>
        <authorList>
            <person name="Howe K."/>
            <person name="Clark M.D."/>
            <person name="Torroja C.F."/>
            <person name="Torrance J."/>
            <person name="Berthelot C."/>
            <person name="Muffato M."/>
            <person name="Collins J.E."/>
            <person name="Humphray S."/>
            <person name="McLaren K."/>
            <person name="Matthews L."/>
            <person name="McLaren S."/>
            <person name="Sealy I."/>
            <person name="Caccamo M."/>
            <person name="Churcher C."/>
            <person name="Scott C."/>
            <person name="Barrett J.C."/>
            <person name="Koch R."/>
            <person name="Rauch G.J."/>
            <person name="White S."/>
            <person name="Chow W."/>
            <person name="Kilian B."/>
            <person name="Quintais L.T."/>
            <person name="Guerra-Assuncao J.A."/>
            <person name="Zhou Y."/>
            <person name="Gu Y."/>
            <person name="Yen J."/>
            <person name="Vogel J.H."/>
            <person name="Eyre T."/>
            <person name="Redmond S."/>
            <person name="Banerjee R."/>
            <person name="Chi J."/>
            <person name="Fu B."/>
            <person name="Langley E."/>
            <person name="Maguire S.F."/>
            <person name="Laird G.K."/>
            <person name="Lloyd D."/>
            <person name="Kenyon E."/>
            <person name="Donaldson S."/>
            <person name="Sehra H."/>
            <person name="Almeida-King J."/>
            <person name="Loveland J."/>
            <person name="Trevanion S."/>
            <person name="Jones M."/>
            <person name="Quail M."/>
            <person name="Willey D."/>
            <person name="Hunt A."/>
            <person name="Burton J."/>
            <person name="Sims S."/>
            <person name="McLay K."/>
            <person name="Plumb B."/>
            <person name="Davis J."/>
            <person name="Clee C."/>
            <person name="Oliver K."/>
            <person name="Clark R."/>
            <person name="Riddle C."/>
            <person name="Elliot D."/>
            <person name="Threadgold G."/>
            <person name="Harden G."/>
            <person name="Ware D."/>
            <person name="Begum S."/>
            <person name="Mortimore B."/>
            <person name="Kerry G."/>
            <person name="Heath P."/>
            <person name="Phillimore B."/>
            <person name="Tracey A."/>
            <person name="Corby N."/>
            <person name="Dunn M."/>
            <person name="Johnson C."/>
            <person name="Wood J."/>
            <person name="Clark S."/>
            <person name="Pelan S."/>
            <person name="Griffiths G."/>
            <person name="Smith M."/>
            <person name="Glithero R."/>
            <person name="Howden P."/>
            <person name="Barker N."/>
            <person name="Lloyd C."/>
            <person name="Stevens C."/>
            <person name="Harley J."/>
            <person name="Holt K."/>
            <person name="Panagiotidis G."/>
            <person name="Lovell J."/>
            <person name="Beasley H."/>
            <person name="Henderson C."/>
            <person name="Gordon D."/>
            <person name="Auger K."/>
            <person name="Wright D."/>
            <person name="Collins J."/>
            <person name="Raisen C."/>
            <person name="Dyer L."/>
            <person name="Leung K."/>
            <person name="Robertson L."/>
            <person name="Ambridge K."/>
            <person name="Leongamornlert D."/>
            <person name="McGuire S."/>
            <person name="Gilderthorp R."/>
            <person name="Griffiths C."/>
            <person name="Manthravadi D."/>
            <person name="Nichol S."/>
            <person name="Barker G."/>
            <person name="Whitehead S."/>
            <person name="Kay M."/>
            <person name="Brown J."/>
            <person name="Murnane C."/>
            <person name="Gray E."/>
            <person name="Humphries M."/>
            <person name="Sycamore N."/>
            <person name="Barker D."/>
            <person name="Saunders D."/>
            <person name="Wallis J."/>
            <person name="Babbage A."/>
            <person name="Hammond S."/>
            <person name="Mashreghi-Mohammadi M."/>
            <person name="Barr L."/>
            <person name="Martin S."/>
            <person name="Wray P."/>
            <person name="Ellington A."/>
            <person name="Matthews N."/>
            <person name="Ellwood M."/>
            <person name="Woodmansey R."/>
            <person name="Clark G."/>
            <person name="Cooper J."/>
            <person name="Tromans A."/>
            <person name="Grafham D."/>
            <person name="Skuce C."/>
            <person name="Pandian R."/>
            <person name="Andrews R."/>
            <person name="Harrison E."/>
            <person name="Kimberley A."/>
            <person name="Garnett J."/>
            <person name="Fosker N."/>
            <person name="Hall R."/>
            <person name="Garner P."/>
            <person name="Kelly D."/>
            <person name="Bird C."/>
            <person name="Palmer S."/>
            <person name="Gehring I."/>
            <person name="Berger A."/>
            <person name="Dooley C.M."/>
            <person name="Ersan-Urun Z."/>
            <person name="Eser C."/>
            <person name="Geiger H."/>
            <person name="Geisler M."/>
            <person name="Karotki L."/>
            <person name="Kirn A."/>
            <person name="Konantz J."/>
            <person name="Konantz M."/>
            <person name="Oberlander M."/>
            <person name="Rudolph-Geiger S."/>
            <person name="Teucke M."/>
            <person name="Lanz C."/>
            <person name="Raddatz G."/>
            <person name="Osoegawa K."/>
            <person name="Zhu B."/>
            <person name="Rapp A."/>
            <person name="Widaa S."/>
            <person name="Langford C."/>
            <person name="Yang F."/>
            <person name="Schuster S.C."/>
            <person name="Carter N.P."/>
            <person name="Harrow J."/>
            <person name="Ning Z."/>
            <person name="Herrero J."/>
            <person name="Searle S.M."/>
            <person name="Enright A."/>
            <person name="Geisler R."/>
            <person name="Plasterk R.H."/>
            <person name="Lee C."/>
            <person name="Westerfield M."/>
            <person name="de Jong P.J."/>
            <person name="Zon L.I."/>
            <person name="Postlethwait J.H."/>
            <person name="Nusslein-Volhard C."/>
            <person name="Hubbard T.J."/>
            <person name="Roest Crollius H."/>
            <person name="Rogers J."/>
            <person name="Stemple D.L."/>
        </authorList>
    </citation>
    <scope>NUCLEOTIDE SEQUENCE [LARGE SCALE GENOMIC DNA]</scope>
    <source>
        <strain evidence="12">Tuebingen</strain>
    </source>
</reference>
<reference evidence="7 8 9" key="4">
    <citation type="submission" date="2008-04" db="EMBL/GenBank/DDBJ databases">
        <authorList>
            <consortium name="NIH - Zebrafish Gene Collection (ZGC) project"/>
        </authorList>
    </citation>
    <scope>NUCLEOTIDE SEQUENCE [LARGE SCALE MRNA]</scope>
    <source>
        <tissue evidence="7">Skin</tissue>
    </source>
</reference>
<proteinExistence type="evidence at protein level"/>
<evidence type="ECO:0000250" key="1">
    <source>
        <dbReference type="UniProtKB" id="Q99KK2"/>
    </source>
</evidence>
<evidence type="ECO:0000256" key="2">
    <source>
        <dbReference type="SAM" id="MobiDB-lite"/>
    </source>
</evidence>
<evidence type="ECO:0000269" key="3">
    <source>
    </source>
</evidence>
<evidence type="ECO:0000303" key="4">
    <source>
    </source>
</evidence>
<evidence type="ECO:0000305" key="5"/>
<evidence type="ECO:0000305" key="6">
    <source>
    </source>
</evidence>
<evidence type="ECO:0000312" key="7">
    <source>
        <dbReference type="EMBL" id="AAI15047.1"/>
    </source>
</evidence>
<evidence type="ECO:0000312" key="8">
    <source>
        <dbReference type="EMBL" id="AAI63617.1"/>
    </source>
</evidence>
<evidence type="ECO:0000312" key="9">
    <source>
        <dbReference type="EMBL" id="AAI65783.1"/>
    </source>
</evidence>
<evidence type="ECO:0000312" key="10">
    <source>
        <dbReference type="EMBL" id="AFC17880.1"/>
    </source>
</evidence>
<evidence type="ECO:0000312" key="11">
    <source>
        <dbReference type="EMBL" id="CAK18993.1"/>
    </source>
</evidence>
<evidence type="ECO:0000312" key="12">
    <source>
        <dbReference type="Proteomes" id="UP000000437"/>
    </source>
</evidence>
<evidence type="ECO:0000312" key="13">
    <source>
        <dbReference type="ZFIN" id="ZDB-GENE-050420-277"/>
    </source>
</evidence>
<protein>
    <recommendedName>
        <fullName evidence="6">N-acylneuraminate cytidylyltransferase A</fullName>
        <ecNumber evidence="3">2.7.7.43</ecNumber>
    </recommendedName>
    <alternativeName>
        <fullName evidence="4">CMP-sialic acid synthetase 1</fullName>
    </alternativeName>
</protein>
<organism>
    <name type="scientific">Danio rerio</name>
    <name type="common">Zebrafish</name>
    <name type="synonym">Brachydanio rerio</name>
    <dbReference type="NCBI Taxonomy" id="7955"/>
    <lineage>
        <taxon>Eukaryota</taxon>
        <taxon>Metazoa</taxon>
        <taxon>Chordata</taxon>
        <taxon>Craniata</taxon>
        <taxon>Vertebrata</taxon>
        <taxon>Euteleostomi</taxon>
        <taxon>Actinopterygii</taxon>
        <taxon>Neopterygii</taxon>
        <taxon>Teleostei</taxon>
        <taxon>Ostariophysi</taxon>
        <taxon>Cypriniformes</taxon>
        <taxon>Danionidae</taxon>
        <taxon>Danioninae</taxon>
        <taxon>Danio</taxon>
    </lineage>
</organism>
<accession>Q0E671</accession>
<accession>B3DJV3</accession>
<accession>Q1RMB6</accession>
<keyword id="KW-0548">Nucleotidyltransferase</keyword>
<keyword id="KW-0539">Nucleus</keyword>
<keyword id="KW-1185">Reference proteome</keyword>
<keyword id="KW-0808">Transferase</keyword>
<name>NEUAA_DANRE</name>